<evidence type="ECO:0000255" key="1">
    <source>
        <dbReference type="HAMAP-Rule" id="MF_01516"/>
    </source>
</evidence>
<dbReference type="EC" id="1.1.1.37" evidence="1"/>
<dbReference type="EMBL" id="CU928158">
    <property type="protein sequence ID" value="CAQ90706.1"/>
    <property type="molecule type" value="Genomic_DNA"/>
</dbReference>
<dbReference type="RefSeq" id="WP_000861594.1">
    <property type="nucleotide sequence ID" value="NC_011740.1"/>
</dbReference>
<dbReference type="SMR" id="B7LRL0"/>
<dbReference type="GeneID" id="75060170"/>
<dbReference type="KEGG" id="efe:EFER_3213"/>
<dbReference type="HOGENOM" id="CLU_047181_0_1_6"/>
<dbReference type="OrthoDB" id="9802969at2"/>
<dbReference type="Proteomes" id="UP000000745">
    <property type="component" value="Chromosome"/>
</dbReference>
<dbReference type="GO" id="GO:0005737">
    <property type="term" value="C:cytoplasm"/>
    <property type="evidence" value="ECO:0007669"/>
    <property type="project" value="TreeGrafter"/>
</dbReference>
<dbReference type="GO" id="GO:0030060">
    <property type="term" value="F:L-malate dehydrogenase (NAD+) activity"/>
    <property type="evidence" value="ECO:0007669"/>
    <property type="project" value="UniProtKB-UniRule"/>
</dbReference>
<dbReference type="GO" id="GO:0006108">
    <property type="term" value="P:malate metabolic process"/>
    <property type="evidence" value="ECO:0007669"/>
    <property type="project" value="InterPro"/>
</dbReference>
<dbReference type="GO" id="GO:0006099">
    <property type="term" value="P:tricarboxylic acid cycle"/>
    <property type="evidence" value="ECO:0007669"/>
    <property type="project" value="UniProtKB-UniRule"/>
</dbReference>
<dbReference type="CDD" id="cd01337">
    <property type="entry name" value="MDH_glyoxysomal_mitochondrial"/>
    <property type="match status" value="1"/>
</dbReference>
<dbReference type="FunFam" id="3.40.50.720:FF:000017">
    <property type="entry name" value="Malate dehydrogenase"/>
    <property type="match status" value="1"/>
</dbReference>
<dbReference type="FunFam" id="3.90.110.10:FF:000001">
    <property type="entry name" value="Malate dehydrogenase"/>
    <property type="match status" value="1"/>
</dbReference>
<dbReference type="Gene3D" id="3.90.110.10">
    <property type="entry name" value="Lactate dehydrogenase/glycoside hydrolase, family 4, C-terminal"/>
    <property type="match status" value="1"/>
</dbReference>
<dbReference type="Gene3D" id="3.40.50.720">
    <property type="entry name" value="NAD(P)-binding Rossmann-like Domain"/>
    <property type="match status" value="1"/>
</dbReference>
<dbReference type="HAMAP" id="MF_01516">
    <property type="entry name" value="Malate_dehydrog_1"/>
    <property type="match status" value="1"/>
</dbReference>
<dbReference type="InterPro" id="IPR001557">
    <property type="entry name" value="L-lactate/malate_DH"/>
</dbReference>
<dbReference type="InterPro" id="IPR022383">
    <property type="entry name" value="Lactate/malate_DH_C"/>
</dbReference>
<dbReference type="InterPro" id="IPR001236">
    <property type="entry name" value="Lactate/malate_DH_N"/>
</dbReference>
<dbReference type="InterPro" id="IPR015955">
    <property type="entry name" value="Lactate_DH/Glyco_Ohase_4_C"/>
</dbReference>
<dbReference type="InterPro" id="IPR001252">
    <property type="entry name" value="Malate_DH_AS"/>
</dbReference>
<dbReference type="InterPro" id="IPR010097">
    <property type="entry name" value="Malate_DH_type1"/>
</dbReference>
<dbReference type="InterPro" id="IPR023958">
    <property type="entry name" value="Malate_DH_type1_bac"/>
</dbReference>
<dbReference type="InterPro" id="IPR036291">
    <property type="entry name" value="NAD(P)-bd_dom_sf"/>
</dbReference>
<dbReference type="NCBIfam" id="TIGR01772">
    <property type="entry name" value="MDH_euk_gproteo"/>
    <property type="match status" value="1"/>
</dbReference>
<dbReference type="PANTHER" id="PTHR11540">
    <property type="entry name" value="MALATE AND LACTATE DEHYDROGENASE"/>
    <property type="match status" value="1"/>
</dbReference>
<dbReference type="PANTHER" id="PTHR11540:SF16">
    <property type="entry name" value="MALATE DEHYDROGENASE, MITOCHONDRIAL"/>
    <property type="match status" value="1"/>
</dbReference>
<dbReference type="Pfam" id="PF02866">
    <property type="entry name" value="Ldh_1_C"/>
    <property type="match status" value="1"/>
</dbReference>
<dbReference type="Pfam" id="PF00056">
    <property type="entry name" value="Ldh_1_N"/>
    <property type="match status" value="1"/>
</dbReference>
<dbReference type="PIRSF" id="PIRSF000102">
    <property type="entry name" value="Lac_mal_DH"/>
    <property type="match status" value="1"/>
</dbReference>
<dbReference type="SUPFAM" id="SSF56327">
    <property type="entry name" value="LDH C-terminal domain-like"/>
    <property type="match status" value="1"/>
</dbReference>
<dbReference type="SUPFAM" id="SSF51735">
    <property type="entry name" value="NAD(P)-binding Rossmann-fold domains"/>
    <property type="match status" value="1"/>
</dbReference>
<dbReference type="PROSITE" id="PS00068">
    <property type="entry name" value="MDH"/>
    <property type="match status" value="1"/>
</dbReference>
<protein>
    <recommendedName>
        <fullName evidence="1">Malate dehydrogenase</fullName>
        <ecNumber evidence="1">1.1.1.37</ecNumber>
    </recommendedName>
</protein>
<gene>
    <name evidence="1" type="primary">mdh</name>
    <name type="ordered locus">EFER_3213</name>
</gene>
<keyword id="KW-0520">NAD</keyword>
<keyword id="KW-0560">Oxidoreductase</keyword>
<keyword id="KW-0816">Tricarboxylic acid cycle</keyword>
<reference key="1">
    <citation type="journal article" date="2009" name="PLoS Genet.">
        <title>Organised genome dynamics in the Escherichia coli species results in highly diverse adaptive paths.</title>
        <authorList>
            <person name="Touchon M."/>
            <person name="Hoede C."/>
            <person name="Tenaillon O."/>
            <person name="Barbe V."/>
            <person name="Baeriswyl S."/>
            <person name="Bidet P."/>
            <person name="Bingen E."/>
            <person name="Bonacorsi S."/>
            <person name="Bouchier C."/>
            <person name="Bouvet O."/>
            <person name="Calteau A."/>
            <person name="Chiapello H."/>
            <person name="Clermont O."/>
            <person name="Cruveiller S."/>
            <person name="Danchin A."/>
            <person name="Diard M."/>
            <person name="Dossat C."/>
            <person name="Karoui M.E."/>
            <person name="Frapy E."/>
            <person name="Garry L."/>
            <person name="Ghigo J.M."/>
            <person name="Gilles A.M."/>
            <person name="Johnson J."/>
            <person name="Le Bouguenec C."/>
            <person name="Lescat M."/>
            <person name="Mangenot S."/>
            <person name="Martinez-Jehanne V."/>
            <person name="Matic I."/>
            <person name="Nassif X."/>
            <person name="Oztas S."/>
            <person name="Petit M.A."/>
            <person name="Pichon C."/>
            <person name="Rouy Z."/>
            <person name="Ruf C.S."/>
            <person name="Schneider D."/>
            <person name="Tourret J."/>
            <person name="Vacherie B."/>
            <person name="Vallenet D."/>
            <person name="Medigue C."/>
            <person name="Rocha E.P.C."/>
            <person name="Denamur E."/>
        </authorList>
    </citation>
    <scope>NUCLEOTIDE SEQUENCE [LARGE SCALE GENOMIC DNA]</scope>
    <source>
        <strain>ATCC 35469 / DSM 13698 / BCRC 15582 / CCUG 18766 / IAM 14443 / JCM 21226 / LMG 7866 / NBRC 102419 / NCTC 12128 / CDC 0568-73</strain>
    </source>
</reference>
<sequence>MKVAVLGAAGGIGQALALLLKTQLPSGSELSLYDIAPVTPGVAVDLSHIPTAVKIKGFAGEDATPALEGADVVLISAGVARKPGMDRSDLFNVNAGIVKNLVQQIATTCPKACIGIITNPVNTTVAIAAEVLKKAGVYDKNKLFGVTTLDIIRSNTFVAELKGKQPDEIEVPVIGGHSGVTILPLLSQIPGVSFTEQEVADLTKRIQNAGTEVVEAKAGGGSATLSMGQAAARFGLSLVRALQGEKGVVECAYVEGDGQYARFFSQPLLLGKNGVEERKSIGKLSAFEQNALEGMLDTLKKDIQLGEAFVNK</sequence>
<comment type="function">
    <text evidence="1">Catalyzes the reversible oxidation of malate to oxaloacetate.</text>
</comment>
<comment type="catalytic activity">
    <reaction evidence="1">
        <text>(S)-malate + NAD(+) = oxaloacetate + NADH + H(+)</text>
        <dbReference type="Rhea" id="RHEA:21432"/>
        <dbReference type="ChEBI" id="CHEBI:15378"/>
        <dbReference type="ChEBI" id="CHEBI:15589"/>
        <dbReference type="ChEBI" id="CHEBI:16452"/>
        <dbReference type="ChEBI" id="CHEBI:57540"/>
        <dbReference type="ChEBI" id="CHEBI:57945"/>
        <dbReference type="EC" id="1.1.1.37"/>
    </reaction>
</comment>
<comment type="subunit">
    <text evidence="1">Homodimer.</text>
</comment>
<comment type="similarity">
    <text evidence="1">Belongs to the LDH/MDH superfamily. MDH type 1 family.</text>
</comment>
<name>MDH_ESCF3</name>
<proteinExistence type="inferred from homology"/>
<organism>
    <name type="scientific">Escherichia fergusonii (strain ATCC 35469 / DSM 13698 / CCUG 18766 / IAM 14443 / JCM 21226 / LMG 7866 / NBRC 102419 / NCTC 12128 / CDC 0568-73)</name>
    <dbReference type="NCBI Taxonomy" id="585054"/>
    <lineage>
        <taxon>Bacteria</taxon>
        <taxon>Pseudomonadati</taxon>
        <taxon>Pseudomonadota</taxon>
        <taxon>Gammaproteobacteria</taxon>
        <taxon>Enterobacterales</taxon>
        <taxon>Enterobacteriaceae</taxon>
        <taxon>Escherichia</taxon>
    </lineage>
</organism>
<feature type="chain" id="PRO_1000146178" description="Malate dehydrogenase">
    <location>
        <begin position="1"/>
        <end position="312"/>
    </location>
</feature>
<feature type="active site" description="Proton acceptor" evidence="1">
    <location>
        <position position="177"/>
    </location>
</feature>
<feature type="binding site" evidence="1">
    <location>
        <begin position="7"/>
        <end position="13"/>
    </location>
    <ligand>
        <name>NAD(+)</name>
        <dbReference type="ChEBI" id="CHEBI:57540"/>
    </ligand>
</feature>
<feature type="binding site" evidence="1">
    <location>
        <position position="34"/>
    </location>
    <ligand>
        <name>NAD(+)</name>
        <dbReference type="ChEBI" id="CHEBI:57540"/>
    </ligand>
</feature>
<feature type="binding site" evidence="1">
    <location>
        <position position="81"/>
    </location>
    <ligand>
        <name>substrate</name>
    </ligand>
</feature>
<feature type="binding site" evidence="1">
    <location>
        <position position="87"/>
    </location>
    <ligand>
        <name>substrate</name>
    </ligand>
</feature>
<feature type="binding site" evidence="1">
    <location>
        <position position="94"/>
    </location>
    <ligand>
        <name>NAD(+)</name>
        <dbReference type="ChEBI" id="CHEBI:57540"/>
    </ligand>
</feature>
<feature type="binding site" evidence="1">
    <location>
        <begin position="117"/>
        <end position="119"/>
    </location>
    <ligand>
        <name>NAD(+)</name>
        <dbReference type="ChEBI" id="CHEBI:57540"/>
    </ligand>
</feature>
<feature type="binding site" evidence="1">
    <location>
        <position position="119"/>
    </location>
    <ligand>
        <name>substrate</name>
    </ligand>
</feature>
<feature type="binding site" evidence="1">
    <location>
        <position position="153"/>
    </location>
    <ligand>
        <name>substrate</name>
    </ligand>
</feature>
<feature type="binding site" evidence="1">
    <location>
        <position position="227"/>
    </location>
    <ligand>
        <name>NAD(+)</name>
        <dbReference type="ChEBI" id="CHEBI:57540"/>
    </ligand>
</feature>
<accession>B7LRL0</accession>